<keyword id="KW-0687">Ribonucleoprotein</keyword>
<keyword id="KW-0689">Ribosomal protein</keyword>
<name>RL27_METC4</name>
<proteinExistence type="inferred from homology"/>
<accession>B7KSH3</accession>
<feature type="chain" id="PRO_1000146537" description="Large ribosomal subunit protein bL27">
    <location>
        <begin position="1"/>
        <end position="88"/>
    </location>
</feature>
<feature type="region of interest" description="Disordered" evidence="2">
    <location>
        <begin position="1"/>
        <end position="23"/>
    </location>
</feature>
<dbReference type="EMBL" id="CP001298">
    <property type="protein sequence ID" value="ACK85641.1"/>
    <property type="molecule type" value="Genomic_DNA"/>
</dbReference>
<dbReference type="RefSeq" id="WP_003603089.1">
    <property type="nucleotide sequence ID" value="NC_011757.1"/>
</dbReference>
<dbReference type="SMR" id="B7KSH3"/>
<dbReference type="GeneID" id="72992146"/>
<dbReference type="KEGG" id="mch:Mchl_4876"/>
<dbReference type="HOGENOM" id="CLU_095424_4_1_5"/>
<dbReference type="Proteomes" id="UP000002385">
    <property type="component" value="Chromosome"/>
</dbReference>
<dbReference type="GO" id="GO:0022625">
    <property type="term" value="C:cytosolic large ribosomal subunit"/>
    <property type="evidence" value="ECO:0007669"/>
    <property type="project" value="TreeGrafter"/>
</dbReference>
<dbReference type="GO" id="GO:0003735">
    <property type="term" value="F:structural constituent of ribosome"/>
    <property type="evidence" value="ECO:0007669"/>
    <property type="project" value="InterPro"/>
</dbReference>
<dbReference type="GO" id="GO:0006412">
    <property type="term" value="P:translation"/>
    <property type="evidence" value="ECO:0007669"/>
    <property type="project" value="UniProtKB-UniRule"/>
</dbReference>
<dbReference type="FunFam" id="2.40.50.100:FF:000020">
    <property type="entry name" value="50S ribosomal protein L27"/>
    <property type="match status" value="1"/>
</dbReference>
<dbReference type="Gene3D" id="2.40.50.100">
    <property type="match status" value="1"/>
</dbReference>
<dbReference type="HAMAP" id="MF_00539">
    <property type="entry name" value="Ribosomal_bL27"/>
    <property type="match status" value="1"/>
</dbReference>
<dbReference type="InterPro" id="IPR001684">
    <property type="entry name" value="Ribosomal_bL27"/>
</dbReference>
<dbReference type="InterPro" id="IPR018261">
    <property type="entry name" value="Ribosomal_bL27_CS"/>
</dbReference>
<dbReference type="NCBIfam" id="TIGR00062">
    <property type="entry name" value="L27"/>
    <property type="match status" value="1"/>
</dbReference>
<dbReference type="PANTHER" id="PTHR15893:SF0">
    <property type="entry name" value="LARGE RIBOSOMAL SUBUNIT PROTEIN BL27M"/>
    <property type="match status" value="1"/>
</dbReference>
<dbReference type="PANTHER" id="PTHR15893">
    <property type="entry name" value="RIBOSOMAL PROTEIN L27"/>
    <property type="match status" value="1"/>
</dbReference>
<dbReference type="Pfam" id="PF01016">
    <property type="entry name" value="Ribosomal_L27"/>
    <property type="match status" value="1"/>
</dbReference>
<dbReference type="PRINTS" id="PR00063">
    <property type="entry name" value="RIBOSOMALL27"/>
</dbReference>
<dbReference type="SUPFAM" id="SSF110324">
    <property type="entry name" value="Ribosomal L27 protein-like"/>
    <property type="match status" value="1"/>
</dbReference>
<dbReference type="PROSITE" id="PS00831">
    <property type="entry name" value="RIBOSOMAL_L27"/>
    <property type="match status" value="1"/>
</dbReference>
<comment type="similarity">
    <text evidence="1">Belongs to the bacterial ribosomal protein bL27 family.</text>
</comment>
<protein>
    <recommendedName>
        <fullName evidence="1">Large ribosomal subunit protein bL27</fullName>
    </recommendedName>
    <alternativeName>
        <fullName evidence="3">50S ribosomal protein L27</fullName>
    </alternativeName>
</protein>
<gene>
    <name evidence="1" type="primary">rpmA</name>
    <name type="ordered locus">Mchl_4876</name>
</gene>
<organism>
    <name type="scientific">Methylorubrum extorquens (strain CM4 / NCIMB 13688)</name>
    <name type="common">Methylobacterium extorquens</name>
    <dbReference type="NCBI Taxonomy" id="440085"/>
    <lineage>
        <taxon>Bacteria</taxon>
        <taxon>Pseudomonadati</taxon>
        <taxon>Pseudomonadota</taxon>
        <taxon>Alphaproteobacteria</taxon>
        <taxon>Hyphomicrobiales</taxon>
        <taxon>Methylobacteriaceae</taxon>
        <taxon>Methylorubrum</taxon>
    </lineage>
</organism>
<reference key="1">
    <citation type="submission" date="2008-12" db="EMBL/GenBank/DDBJ databases">
        <title>Complete sequence of chromosome of Methylobacterium chloromethanicum CM4.</title>
        <authorList>
            <consortium name="US DOE Joint Genome Institute"/>
            <person name="Lucas S."/>
            <person name="Copeland A."/>
            <person name="Lapidus A."/>
            <person name="Glavina del Rio T."/>
            <person name="Dalin E."/>
            <person name="Tice H."/>
            <person name="Bruce D."/>
            <person name="Goodwin L."/>
            <person name="Pitluck S."/>
            <person name="Chertkov O."/>
            <person name="Brettin T."/>
            <person name="Detter J.C."/>
            <person name="Han C."/>
            <person name="Larimer F."/>
            <person name="Land M."/>
            <person name="Hauser L."/>
            <person name="Kyrpides N."/>
            <person name="Mikhailova N."/>
            <person name="Marx C."/>
            <person name="Richardson P."/>
        </authorList>
    </citation>
    <scope>NUCLEOTIDE SEQUENCE [LARGE SCALE GENOMIC DNA]</scope>
    <source>
        <strain>CM4 / NCIMB 13688</strain>
    </source>
</reference>
<sequence>MAHKKAGGSSRNGRDSAGRRLGVKKFGSEAVIPGNIIVRQRGTKWHPGTNVGMGKDHTLFALVPGKVQFETRRGRDFVTVVPLAQAAE</sequence>
<evidence type="ECO:0000255" key="1">
    <source>
        <dbReference type="HAMAP-Rule" id="MF_00539"/>
    </source>
</evidence>
<evidence type="ECO:0000256" key="2">
    <source>
        <dbReference type="SAM" id="MobiDB-lite"/>
    </source>
</evidence>
<evidence type="ECO:0000305" key="3"/>